<protein>
    <recommendedName>
        <fullName evidence="1">Nucleoside triphosphate pyrophosphatase</fullName>
        <ecNumber evidence="1">3.6.1.9</ecNumber>
    </recommendedName>
    <alternativeName>
        <fullName evidence="1">Nucleotide pyrophosphatase</fullName>
        <shortName evidence="1">Nucleotide PPase</shortName>
    </alternativeName>
</protein>
<accession>Q8FRM5</accession>
<evidence type="ECO:0000255" key="1">
    <source>
        <dbReference type="HAMAP-Rule" id="MF_00528"/>
    </source>
</evidence>
<name>NTPP_COREF</name>
<comment type="function">
    <text evidence="1">Nucleoside triphosphate pyrophosphatase. May have a dual role in cell division arrest and in preventing the incorporation of modified nucleotides into cellular nucleic acids.</text>
</comment>
<comment type="catalytic activity">
    <reaction evidence="1">
        <text>a ribonucleoside 5'-triphosphate + H2O = a ribonucleoside 5'-phosphate + diphosphate + H(+)</text>
        <dbReference type="Rhea" id="RHEA:23996"/>
        <dbReference type="ChEBI" id="CHEBI:15377"/>
        <dbReference type="ChEBI" id="CHEBI:15378"/>
        <dbReference type="ChEBI" id="CHEBI:33019"/>
        <dbReference type="ChEBI" id="CHEBI:58043"/>
        <dbReference type="ChEBI" id="CHEBI:61557"/>
        <dbReference type="EC" id="3.6.1.9"/>
    </reaction>
</comment>
<comment type="catalytic activity">
    <reaction evidence="1">
        <text>a 2'-deoxyribonucleoside 5'-triphosphate + H2O = a 2'-deoxyribonucleoside 5'-phosphate + diphosphate + H(+)</text>
        <dbReference type="Rhea" id="RHEA:44644"/>
        <dbReference type="ChEBI" id="CHEBI:15377"/>
        <dbReference type="ChEBI" id="CHEBI:15378"/>
        <dbReference type="ChEBI" id="CHEBI:33019"/>
        <dbReference type="ChEBI" id="CHEBI:61560"/>
        <dbReference type="ChEBI" id="CHEBI:65317"/>
        <dbReference type="EC" id="3.6.1.9"/>
    </reaction>
</comment>
<comment type="cofactor">
    <cofactor evidence="1">
        <name>a divalent metal cation</name>
        <dbReference type="ChEBI" id="CHEBI:60240"/>
    </cofactor>
</comment>
<comment type="subcellular location">
    <subcellularLocation>
        <location evidence="1">Cytoplasm</location>
    </subcellularLocation>
</comment>
<comment type="similarity">
    <text evidence="1">Belongs to the Maf family.</text>
</comment>
<sequence length="197" mass="21161">MQIVLASQSPSRLMILRQAGVEPVIHPAHVDEDAIIAQLAGAEPDEIVTRLALAKAQAIAPEHPGDVVIGGDSMLLLDGQLQGKPHTPEATIERWRQQRGRTAHLITGHAICLGERRVVEASRTTIHFADASDTDIEAYARSGEPLQCAGAFTLEALGGWFIDAIEGDPSSVIGLSLPVVRRALYSFGLNASDFWTK</sequence>
<keyword id="KW-0963">Cytoplasm</keyword>
<keyword id="KW-0378">Hydrolase</keyword>
<keyword id="KW-0546">Nucleotide metabolism</keyword>
<keyword id="KW-1185">Reference proteome</keyword>
<reference key="1">
    <citation type="journal article" date="2003" name="Genome Res.">
        <title>Comparative complete genome sequence analysis of the amino acid replacements responsible for the thermostability of Corynebacterium efficiens.</title>
        <authorList>
            <person name="Nishio Y."/>
            <person name="Nakamura Y."/>
            <person name="Kawarabayasi Y."/>
            <person name="Usuda Y."/>
            <person name="Kimura E."/>
            <person name="Sugimoto S."/>
            <person name="Matsui K."/>
            <person name="Yamagishi A."/>
            <person name="Kikuchi H."/>
            <person name="Ikeo K."/>
            <person name="Gojobori T."/>
        </authorList>
    </citation>
    <scope>NUCLEOTIDE SEQUENCE [LARGE SCALE GENOMIC DNA]</scope>
    <source>
        <strain>DSM 44549 / YS-314 / AJ 12310 / JCM 11189 / NBRC 100395</strain>
    </source>
</reference>
<gene>
    <name type="ordered locus">CE0735</name>
</gene>
<organism>
    <name type="scientific">Corynebacterium efficiens (strain DSM 44549 / YS-314 / AJ 12310 / JCM 11189 / NBRC 100395)</name>
    <dbReference type="NCBI Taxonomy" id="196164"/>
    <lineage>
        <taxon>Bacteria</taxon>
        <taxon>Bacillati</taxon>
        <taxon>Actinomycetota</taxon>
        <taxon>Actinomycetes</taxon>
        <taxon>Mycobacteriales</taxon>
        <taxon>Corynebacteriaceae</taxon>
        <taxon>Corynebacterium</taxon>
    </lineage>
</organism>
<dbReference type="EC" id="3.6.1.9" evidence="1"/>
<dbReference type="EMBL" id="BA000035">
    <property type="protein sequence ID" value="BAC17545.1"/>
    <property type="molecule type" value="Genomic_DNA"/>
</dbReference>
<dbReference type="RefSeq" id="WP_006769583.1">
    <property type="nucleotide sequence ID" value="NC_004369.1"/>
</dbReference>
<dbReference type="SMR" id="Q8FRM5"/>
<dbReference type="STRING" id="196164.gene:10741137"/>
<dbReference type="KEGG" id="cef:CE0735"/>
<dbReference type="eggNOG" id="COG0424">
    <property type="taxonomic scope" value="Bacteria"/>
</dbReference>
<dbReference type="HOGENOM" id="CLU_040416_1_2_11"/>
<dbReference type="OrthoDB" id="3527985at2"/>
<dbReference type="Proteomes" id="UP000001409">
    <property type="component" value="Chromosome"/>
</dbReference>
<dbReference type="GO" id="GO:0005737">
    <property type="term" value="C:cytoplasm"/>
    <property type="evidence" value="ECO:0007669"/>
    <property type="project" value="UniProtKB-SubCell"/>
</dbReference>
<dbReference type="GO" id="GO:0047429">
    <property type="term" value="F:nucleoside triphosphate diphosphatase activity"/>
    <property type="evidence" value="ECO:0007669"/>
    <property type="project" value="UniProtKB-EC"/>
</dbReference>
<dbReference type="GO" id="GO:0009117">
    <property type="term" value="P:nucleotide metabolic process"/>
    <property type="evidence" value="ECO:0007669"/>
    <property type="project" value="UniProtKB-KW"/>
</dbReference>
<dbReference type="CDD" id="cd00555">
    <property type="entry name" value="Maf"/>
    <property type="match status" value="1"/>
</dbReference>
<dbReference type="Gene3D" id="3.90.950.10">
    <property type="match status" value="1"/>
</dbReference>
<dbReference type="HAMAP" id="MF_00528">
    <property type="entry name" value="Maf"/>
    <property type="match status" value="1"/>
</dbReference>
<dbReference type="InterPro" id="IPR029001">
    <property type="entry name" value="ITPase-like_fam"/>
</dbReference>
<dbReference type="InterPro" id="IPR003697">
    <property type="entry name" value="Maf-like"/>
</dbReference>
<dbReference type="NCBIfam" id="TIGR00172">
    <property type="entry name" value="maf"/>
    <property type="match status" value="1"/>
</dbReference>
<dbReference type="PANTHER" id="PTHR43213">
    <property type="entry name" value="BIFUNCTIONAL DTTP/UTP PYROPHOSPHATASE/METHYLTRANSFERASE PROTEIN-RELATED"/>
    <property type="match status" value="1"/>
</dbReference>
<dbReference type="PANTHER" id="PTHR43213:SF5">
    <property type="entry name" value="BIFUNCTIONAL DTTP_UTP PYROPHOSPHATASE_METHYLTRANSFERASE PROTEIN-RELATED"/>
    <property type="match status" value="1"/>
</dbReference>
<dbReference type="Pfam" id="PF02545">
    <property type="entry name" value="Maf"/>
    <property type="match status" value="1"/>
</dbReference>
<dbReference type="PIRSF" id="PIRSF006305">
    <property type="entry name" value="Maf"/>
    <property type="match status" value="1"/>
</dbReference>
<dbReference type="SUPFAM" id="SSF52972">
    <property type="entry name" value="ITPase-like"/>
    <property type="match status" value="1"/>
</dbReference>
<feature type="chain" id="PRO_0000123017" description="Nucleoside triphosphate pyrophosphatase">
    <location>
        <begin position="1"/>
        <end position="197"/>
    </location>
</feature>
<feature type="active site" description="Proton acceptor" evidence="1">
    <location>
        <position position="72"/>
    </location>
</feature>
<proteinExistence type="inferred from homology"/>